<keyword id="KW-0028">Amino-acid biosynthesis</keyword>
<keyword id="KW-0057">Aromatic amino acid biosynthesis</keyword>
<keyword id="KW-0210">Decarboxylase</keyword>
<keyword id="KW-0456">Lyase</keyword>
<keyword id="KW-0822">Tryptophan biosynthesis</keyword>
<sequence>MKYLSAILEEKRREVEALKRQNPSARYRDVASSLPSCRGFARALQGEGGSIRLIAEVKKASPSRGVIVEDFDPVRIALAYEALGASALSVLTDRHFFQGSAGYLQQVAAAVSLPVLRKDFIIDELQIFESRIMGADAILLIVAALEPSELHDYLQMAGEIGLDVLVEVHDRHELALAIESGAEVVGVNNRNLKDFSVDPATSASLRPYFPSGVIAVSESGLKTADDIALVRDAGFDAVLIGEGLQVSSELRSLSWPNA</sequence>
<reference key="1">
    <citation type="submission" date="2007-03" db="EMBL/GenBank/DDBJ databases">
        <title>Complete sequence of Prosthecochloris vibrioformis DSM 265.</title>
        <authorList>
            <consortium name="US DOE Joint Genome Institute"/>
            <person name="Copeland A."/>
            <person name="Lucas S."/>
            <person name="Lapidus A."/>
            <person name="Barry K."/>
            <person name="Detter J.C."/>
            <person name="Glavina del Rio T."/>
            <person name="Hammon N."/>
            <person name="Israni S."/>
            <person name="Pitluck S."/>
            <person name="Schmutz J."/>
            <person name="Larimer F."/>
            <person name="Land M."/>
            <person name="Hauser L."/>
            <person name="Mikhailova N."/>
            <person name="Li T."/>
            <person name="Overmann J."/>
            <person name="Schuster S.C."/>
            <person name="Bryant D.A."/>
            <person name="Richardson P."/>
        </authorList>
    </citation>
    <scope>NUCLEOTIDE SEQUENCE [LARGE SCALE GENOMIC DNA]</scope>
    <source>
        <strain>DSM 265 / 1930</strain>
    </source>
</reference>
<organism>
    <name type="scientific">Chlorobium phaeovibrioides (strain DSM 265 / 1930)</name>
    <name type="common">Prosthecochloris vibrioformis (strain DSM 265)</name>
    <dbReference type="NCBI Taxonomy" id="290318"/>
    <lineage>
        <taxon>Bacteria</taxon>
        <taxon>Pseudomonadati</taxon>
        <taxon>Chlorobiota</taxon>
        <taxon>Chlorobiia</taxon>
        <taxon>Chlorobiales</taxon>
        <taxon>Chlorobiaceae</taxon>
        <taxon>Chlorobium/Pelodictyon group</taxon>
        <taxon>Chlorobium</taxon>
    </lineage>
</organism>
<feature type="chain" id="PRO_1000076423" description="Indole-3-glycerol phosphate synthase">
    <location>
        <begin position="1"/>
        <end position="258"/>
    </location>
</feature>
<comment type="catalytic activity">
    <reaction evidence="1">
        <text>1-(2-carboxyphenylamino)-1-deoxy-D-ribulose 5-phosphate + H(+) = (1S,2R)-1-C-(indol-3-yl)glycerol 3-phosphate + CO2 + H2O</text>
        <dbReference type="Rhea" id="RHEA:23476"/>
        <dbReference type="ChEBI" id="CHEBI:15377"/>
        <dbReference type="ChEBI" id="CHEBI:15378"/>
        <dbReference type="ChEBI" id="CHEBI:16526"/>
        <dbReference type="ChEBI" id="CHEBI:58613"/>
        <dbReference type="ChEBI" id="CHEBI:58866"/>
        <dbReference type="EC" id="4.1.1.48"/>
    </reaction>
</comment>
<comment type="pathway">
    <text evidence="1">Amino-acid biosynthesis; L-tryptophan biosynthesis; L-tryptophan from chorismate: step 4/5.</text>
</comment>
<comment type="similarity">
    <text evidence="1">Belongs to the TrpC family.</text>
</comment>
<proteinExistence type="inferred from homology"/>
<accession>A4SG41</accession>
<name>TRPC_CHLPM</name>
<dbReference type="EC" id="4.1.1.48" evidence="1"/>
<dbReference type="EMBL" id="CP000607">
    <property type="protein sequence ID" value="ABP37450.1"/>
    <property type="molecule type" value="Genomic_DNA"/>
</dbReference>
<dbReference type="SMR" id="A4SG41"/>
<dbReference type="STRING" id="290318.Cvib_1439"/>
<dbReference type="KEGG" id="pvi:Cvib_1439"/>
<dbReference type="eggNOG" id="COG0134">
    <property type="taxonomic scope" value="Bacteria"/>
</dbReference>
<dbReference type="HOGENOM" id="CLU_034247_2_0_10"/>
<dbReference type="OrthoDB" id="9804217at2"/>
<dbReference type="UniPathway" id="UPA00035">
    <property type="reaction ID" value="UER00043"/>
</dbReference>
<dbReference type="GO" id="GO:0004425">
    <property type="term" value="F:indole-3-glycerol-phosphate synthase activity"/>
    <property type="evidence" value="ECO:0007669"/>
    <property type="project" value="UniProtKB-UniRule"/>
</dbReference>
<dbReference type="GO" id="GO:0004640">
    <property type="term" value="F:phosphoribosylanthranilate isomerase activity"/>
    <property type="evidence" value="ECO:0007669"/>
    <property type="project" value="TreeGrafter"/>
</dbReference>
<dbReference type="GO" id="GO:0000162">
    <property type="term" value="P:L-tryptophan biosynthetic process"/>
    <property type="evidence" value="ECO:0007669"/>
    <property type="project" value="UniProtKB-UniRule"/>
</dbReference>
<dbReference type="CDD" id="cd00331">
    <property type="entry name" value="IGPS"/>
    <property type="match status" value="1"/>
</dbReference>
<dbReference type="FunFam" id="3.20.20.70:FF:000024">
    <property type="entry name" value="Indole-3-glycerol phosphate synthase"/>
    <property type="match status" value="1"/>
</dbReference>
<dbReference type="Gene3D" id="3.20.20.70">
    <property type="entry name" value="Aldolase class I"/>
    <property type="match status" value="1"/>
</dbReference>
<dbReference type="HAMAP" id="MF_00134_B">
    <property type="entry name" value="IGPS_B"/>
    <property type="match status" value="1"/>
</dbReference>
<dbReference type="InterPro" id="IPR013785">
    <property type="entry name" value="Aldolase_TIM"/>
</dbReference>
<dbReference type="InterPro" id="IPR045186">
    <property type="entry name" value="Indole-3-glycerol_P_synth"/>
</dbReference>
<dbReference type="InterPro" id="IPR013798">
    <property type="entry name" value="Indole-3-glycerol_P_synth_dom"/>
</dbReference>
<dbReference type="InterPro" id="IPR001468">
    <property type="entry name" value="Indole-3-GlycerolPSynthase_CS"/>
</dbReference>
<dbReference type="InterPro" id="IPR011060">
    <property type="entry name" value="RibuloseP-bd_barrel"/>
</dbReference>
<dbReference type="NCBIfam" id="NF001377">
    <property type="entry name" value="PRK00278.2-4"/>
    <property type="match status" value="1"/>
</dbReference>
<dbReference type="PANTHER" id="PTHR22854:SF2">
    <property type="entry name" value="INDOLE-3-GLYCEROL-PHOSPHATE SYNTHASE"/>
    <property type="match status" value="1"/>
</dbReference>
<dbReference type="PANTHER" id="PTHR22854">
    <property type="entry name" value="TRYPTOPHAN BIOSYNTHESIS PROTEIN"/>
    <property type="match status" value="1"/>
</dbReference>
<dbReference type="Pfam" id="PF00218">
    <property type="entry name" value="IGPS"/>
    <property type="match status" value="1"/>
</dbReference>
<dbReference type="SUPFAM" id="SSF51366">
    <property type="entry name" value="Ribulose-phoshate binding barrel"/>
    <property type="match status" value="1"/>
</dbReference>
<dbReference type="PROSITE" id="PS00614">
    <property type="entry name" value="IGPS"/>
    <property type="match status" value="1"/>
</dbReference>
<evidence type="ECO:0000255" key="1">
    <source>
        <dbReference type="HAMAP-Rule" id="MF_00134"/>
    </source>
</evidence>
<protein>
    <recommendedName>
        <fullName evidence="1">Indole-3-glycerol phosphate synthase</fullName>
        <shortName evidence="1">IGPS</shortName>
        <ecNumber evidence="1">4.1.1.48</ecNumber>
    </recommendedName>
</protein>
<gene>
    <name evidence="1" type="primary">trpC</name>
    <name type="ordered locus">Cvib_1439</name>
</gene>